<accession>P9WLH2</accession>
<accession>L0TBN9</accession>
<accession>Q10513</accession>
<organism>
    <name type="scientific">Mycobacterium tuberculosis (strain CDC 1551 / Oshkosh)</name>
    <dbReference type="NCBI Taxonomy" id="83331"/>
    <lineage>
        <taxon>Bacteria</taxon>
        <taxon>Bacillati</taxon>
        <taxon>Actinomycetota</taxon>
        <taxon>Actinomycetes</taxon>
        <taxon>Mycobacteriales</taxon>
        <taxon>Mycobacteriaceae</taxon>
        <taxon>Mycobacterium</taxon>
        <taxon>Mycobacterium tuberculosis complex</taxon>
    </lineage>
</organism>
<keyword id="KW-0175">Coiled coil</keyword>
<keyword id="KW-1185">Reference proteome</keyword>
<gene>
    <name type="ordered locus">MT2288</name>
</gene>
<sequence>MKAGVAQQRSLLELAKLDAELTRIAHRATHLPQRAAYQQVQAEHNAANDRMAALRIAAEDLDGQVSRFESEIDAVRKRGDRDRSLLTSGATDAKQLADLQHELDSLQRRQASLEDALLEVLERREELQAQQTAESRALQALRADLAAAQQALDEALAEIDQARHQHSSQRDMLTATLDPELAGLYERQRAGGGPGAGRLQGHRCGACRIEIGRGELAQISAAAEDEVVRCPECGAILLRLEGFEE</sequence>
<evidence type="ECO:0000255" key="1"/>
<dbReference type="EMBL" id="AE000516">
    <property type="status" value="NOT_ANNOTATED_CDS"/>
    <property type="molecule type" value="Genomic_DNA"/>
</dbReference>
<dbReference type="PIR" id="A70777">
    <property type="entry name" value="A70777"/>
</dbReference>
<dbReference type="RefSeq" id="WP_003411501.1">
    <property type="nucleotide sequence ID" value="NZ_KK341227.1"/>
</dbReference>
<dbReference type="SMR" id="P9WLH2"/>
<dbReference type="PATRIC" id="fig|83331.31.peg.2463"/>
<dbReference type="Proteomes" id="UP000001020">
    <property type="component" value="Chromosome"/>
</dbReference>
<dbReference type="Gene3D" id="1.10.287.1490">
    <property type="match status" value="1"/>
</dbReference>
<dbReference type="InterPro" id="IPR056003">
    <property type="entry name" value="CT398_CC_hairpin"/>
</dbReference>
<dbReference type="InterPro" id="IPR052376">
    <property type="entry name" value="Oxidative_Scav/Glycosyltrans"/>
</dbReference>
<dbReference type="InterPro" id="IPR003743">
    <property type="entry name" value="Zf-RING_7"/>
</dbReference>
<dbReference type="PANTHER" id="PTHR39082">
    <property type="entry name" value="PHOSPHOLIPASE C-BETA-2-RELATED"/>
    <property type="match status" value="1"/>
</dbReference>
<dbReference type="PANTHER" id="PTHR39082:SF1">
    <property type="entry name" value="SCAVENGER RECEPTOR CLASS A MEMBER 3"/>
    <property type="match status" value="1"/>
</dbReference>
<dbReference type="Pfam" id="PF24481">
    <property type="entry name" value="CT398_CC"/>
    <property type="match status" value="1"/>
</dbReference>
<dbReference type="Pfam" id="PF02591">
    <property type="entry name" value="Zn_ribbon_9"/>
    <property type="match status" value="1"/>
</dbReference>
<proteinExistence type="predicted"/>
<reference key="1">
    <citation type="journal article" date="2002" name="J. Bacteriol.">
        <title>Whole-genome comparison of Mycobacterium tuberculosis clinical and laboratory strains.</title>
        <authorList>
            <person name="Fleischmann R.D."/>
            <person name="Alland D."/>
            <person name="Eisen J.A."/>
            <person name="Carpenter L."/>
            <person name="White O."/>
            <person name="Peterson J.D."/>
            <person name="DeBoy R.T."/>
            <person name="Dodson R.J."/>
            <person name="Gwinn M.L."/>
            <person name="Haft D.H."/>
            <person name="Hickey E.K."/>
            <person name="Kolonay J.F."/>
            <person name="Nelson W.C."/>
            <person name="Umayam L.A."/>
            <person name="Ermolaeva M.D."/>
            <person name="Salzberg S.L."/>
            <person name="Delcher A."/>
            <person name="Utterback T.R."/>
            <person name="Weidman J.F."/>
            <person name="Khouri H.M."/>
            <person name="Gill J."/>
            <person name="Mikula A."/>
            <person name="Bishai W."/>
            <person name="Jacobs W.R. Jr."/>
            <person name="Venter J.C."/>
            <person name="Fraser C.M."/>
        </authorList>
    </citation>
    <scope>NUCLEOTIDE SEQUENCE [LARGE SCALE GENOMIC DNA]</scope>
    <source>
        <strain>CDC 1551 / Oshkosh</strain>
    </source>
</reference>
<protein>
    <recommendedName>
        <fullName>Uncharacterized protein MT2288</fullName>
    </recommendedName>
</protein>
<feature type="chain" id="PRO_0000427479" description="Uncharacterized protein MT2288">
    <location>
        <begin position="1"/>
        <end position="245"/>
    </location>
</feature>
<feature type="coiled-coil region" evidence="1">
    <location>
        <begin position="33"/>
        <end position="176"/>
    </location>
</feature>
<name>Y2229_MYCTO</name>